<reference key="1">
    <citation type="journal article" date="2005" name="Genome Res.">
        <title>Comparative genome sequencing of Drosophila pseudoobscura: chromosomal, gene, and cis-element evolution.</title>
        <authorList>
            <person name="Richards S."/>
            <person name="Liu Y."/>
            <person name="Bettencourt B.R."/>
            <person name="Hradecky P."/>
            <person name="Letovsky S."/>
            <person name="Nielsen R."/>
            <person name="Thornton K."/>
            <person name="Hubisz M.J."/>
            <person name="Chen R."/>
            <person name="Meisel R.P."/>
            <person name="Couronne O."/>
            <person name="Hua S."/>
            <person name="Smith M.A."/>
            <person name="Zhang P."/>
            <person name="Liu J."/>
            <person name="Bussemaker H.J."/>
            <person name="van Batenburg M.F."/>
            <person name="Howells S.L."/>
            <person name="Scherer S.E."/>
            <person name="Sodergren E."/>
            <person name="Matthews B.B."/>
            <person name="Crosby M.A."/>
            <person name="Schroeder A.J."/>
            <person name="Ortiz-Barrientos D."/>
            <person name="Rives C.M."/>
            <person name="Metzker M.L."/>
            <person name="Muzny D.M."/>
            <person name="Scott G."/>
            <person name="Steffen D."/>
            <person name="Wheeler D.A."/>
            <person name="Worley K.C."/>
            <person name="Havlak P."/>
            <person name="Durbin K.J."/>
            <person name="Egan A."/>
            <person name="Gill R."/>
            <person name="Hume J."/>
            <person name="Morgan M.B."/>
            <person name="Miner G."/>
            <person name="Hamilton C."/>
            <person name="Huang Y."/>
            <person name="Waldron L."/>
            <person name="Verduzco D."/>
            <person name="Clerc-Blankenburg K.P."/>
            <person name="Dubchak I."/>
            <person name="Noor M.A.F."/>
            <person name="Anderson W."/>
            <person name="White K.P."/>
            <person name="Clark A.G."/>
            <person name="Schaeffer S.W."/>
            <person name="Gelbart W.M."/>
            <person name="Weinstock G.M."/>
            <person name="Gibbs R.A."/>
        </authorList>
    </citation>
    <scope>NUCLEOTIDE SEQUENCE [LARGE SCALE GENOMIC DNA]</scope>
    <source>
        <strain>MV2-25 / Tucson 14011-0121.94</strain>
    </source>
</reference>
<comment type="similarity">
    <text evidence="3">Belongs to the universal ribosomal protein uS17 family.</text>
</comment>
<comment type="sequence caution" evidence="4">
    <conflict type="erroneous gene model prediction">
        <sequence resource="EMBL-CDS" id="EAL24932"/>
    </conflict>
</comment>
<organism>
    <name type="scientific">Drosophila pseudoobscura pseudoobscura</name>
    <name type="common">Fruit fly</name>
    <dbReference type="NCBI Taxonomy" id="46245"/>
    <lineage>
        <taxon>Eukaryota</taxon>
        <taxon>Metazoa</taxon>
        <taxon>Ecdysozoa</taxon>
        <taxon>Arthropoda</taxon>
        <taxon>Hexapoda</taxon>
        <taxon>Insecta</taxon>
        <taxon>Pterygota</taxon>
        <taxon>Neoptera</taxon>
        <taxon>Endopterygota</taxon>
        <taxon>Diptera</taxon>
        <taxon>Brachycera</taxon>
        <taxon>Muscomorpha</taxon>
        <taxon>Ephydroidea</taxon>
        <taxon>Drosophilidae</taxon>
        <taxon>Drosophila</taxon>
        <taxon>Sophophora</taxon>
    </lineage>
</organism>
<keyword id="KW-0007">Acetylation</keyword>
<keyword id="KW-1185">Reference proteome</keyword>
<keyword id="KW-0687">Ribonucleoprotein</keyword>
<keyword id="KW-0689">Ribosomal protein</keyword>
<keyword id="KW-0694">RNA-binding</keyword>
<keyword id="KW-0699">rRNA-binding</keyword>
<protein>
    <recommendedName>
        <fullName evidence="4">Small ribosomal subunit protein uS17</fullName>
    </recommendedName>
    <alternativeName>
        <fullName>40S ribosomal protein S11</fullName>
    </alternativeName>
</protein>
<sequence>MADQNERAFQKQFGVNLNRKVKPGVTKKKILRRYRDVGLGFKTPREAIDGTYIDKKCPWTGDVRIRGRILIGVVRKTKMQRTIVIRRDYLHFVRKYSRFEKRHRNMSVHCSPAFRDVEHGDIVTIGECRPLSKTVRFNVLKVNKGQGAKKSFKKF</sequence>
<gene>
    <name evidence="2" type="primary">RpS11</name>
    <name type="ORF">GA21371</name>
</gene>
<feature type="initiator methionine" description="Removed" evidence="1">
    <location>
        <position position="1"/>
    </location>
</feature>
<feature type="chain" id="PRO_0000282945" description="Small ribosomal subunit protein uS17" evidence="1">
    <location>
        <begin position="2"/>
        <end position="155"/>
    </location>
</feature>
<feature type="modified residue" description="N-acetylalanine" evidence="1">
    <location>
        <position position="2"/>
    </location>
</feature>
<accession>Q292D0</accession>
<name>RS11_DROPS</name>
<dbReference type="EMBL" id="CM000071">
    <property type="protein sequence ID" value="EAL24932.2"/>
    <property type="status" value="ALT_SEQ"/>
    <property type="molecule type" value="Genomic_DNA"/>
</dbReference>
<dbReference type="SMR" id="Q292D0"/>
<dbReference type="FunCoup" id="Q292D0">
    <property type="interactions" value="1581"/>
</dbReference>
<dbReference type="STRING" id="46245.Q292D0"/>
<dbReference type="eggNOG" id="KOG1728">
    <property type="taxonomic scope" value="Eukaryota"/>
</dbReference>
<dbReference type="InParanoid" id="Q292D0"/>
<dbReference type="ChiTaRS" id="RpS11">
    <property type="organism name" value="fly"/>
</dbReference>
<dbReference type="Proteomes" id="UP000001819">
    <property type="component" value="Unplaced"/>
</dbReference>
<dbReference type="GO" id="GO:0022627">
    <property type="term" value="C:cytosolic small ribosomal subunit"/>
    <property type="evidence" value="ECO:0007669"/>
    <property type="project" value="TreeGrafter"/>
</dbReference>
<dbReference type="GO" id="GO:0019843">
    <property type="term" value="F:rRNA binding"/>
    <property type="evidence" value="ECO:0007669"/>
    <property type="project" value="UniProtKB-KW"/>
</dbReference>
<dbReference type="GO" id="GO:0003735">
    <property type="term" value="F:structural constituent of ribosome"/>
    <property type="evidence" value="ECO:0007669"/>
    <property type="project" value="InterPro"/>
</dbReference>
<dbReference type="GO" id="GO:0006412">
    <property type="term" value="P:translation"/>
    <property type="evidence" value="ECO:0007669"/>
    <property type="project" value="InterPro"/>
</dbReference>
<dbReference type="CDD" id="cd00364">
    <property type="entry name" value="Ribosomal_uS17"/>
    <property type="match status" value="1"/>
</dbReference>
<dbReference type="FunFam" id="2.40.50.1000:FF:000002">
    <property type="entry name" value="40S ribosomal protein S11"/>
    <property type="match status" value="1"/>
</dbReference>
<dbReference type="Gene3D" id="2.40.50.1000">
    <property type="match status" value="1"/>
</dbReference>
<dbReference type="InterPro" id="IPR012340">
    <property type="entry name" value="NA-bd_OB-fold"/>
</dbReference>
<dbReference type="InterPro" id="IPR000266">
    <property type="entry name" value="Ribosomal_uS17"/>
</dbReference>
<dbReference type="InterPro" id="IPR019979">
    <property type="entry name" value="Ribosomal_uS17_CS"/>
</dbReference>
<dbReference type="InterPro" id="IPR032440">
    <property type="entry name" value="Ribosomal_uS17_N"/>
</dbReference>
<dbReference type="PANTHER" id="PTHR10744">
    <property type="entry name" value="40S RIBOSOMAL PROTEIN S11 FAMILY MEMBER"/>
    <property type="match status" value="1"/>
</dbReference>
<dbReference type="PANTHER" id="PTHR10744:SF9">
    <property type="entry name" value="40S RIBOSOMAL PROTEIN S11-RELATED"/>
    <property type="match status" value="1"/>
</dbReference>
<dbReference type="Pfam" id="PF00366">
    <property type="entry name" value="Ribosomal_S17"/>
    <property type="match status" value="1"/>
</dbReference>
<dbReference type="Pfam" id="PF16205">
    <property type="entry name" value="Ribosomal_S17_N"/>
    <property type="match status" value="1"/>
</dbReference>
<dbReference type="PRINTS" id="PR00973">
    <property type="entry name" value="RIBOSOMALS17"/>
</dbReference>
<dbReference type="SUPFAM" id="SSF50249">
    <property type="entry name" value="Nucleic acid-binding proteins"/>
    <property type="match status" value="1"/>
</dbReference>
<dbReference type="PROSITE" id="PS00056">
    <property type="entry name" value="RIBOSOMAL_S17"/>
    <property type="match status" value="1"/>
</dbReference>
<evidence type="ECO:0000250" key="1">
    <source>
        <dbReference type="UniProtKB" id="P62280"/>
    </source>
</evidence>
<evidence type="ECO:0000250" key="2">
    <source>
        <dbReference type="UniProtKB" id="Q0E9B6"/>
    </source>
</evidence>
<evidence type="ECO:0000255" key="3"/>
<evidence type="ECO:0000305" key="4"/>
<proteinExistence type="inferred from homology"/>